<evidence type="ECO:0000255" key="1">
    <source>
        <dbReference type="HAMAP-Rule" id="MF_00277"/>
    </source>
</evidence>
<evidence type="ECO:0000255" key="2">
    <source>
        <dbReference type="PROSITE-ProRule" id="PRU01175"/>
    </source>
</evidence>
<evidence type="ECO:0000256" key="3">
    <source>
        <dbReference type="SAM" id="MobiDB-lite"/>
    </source>
</evidence>
<organism>
    <name type="scientific">Gluconobacter oxydans (strain 621H)</name>
    <name type="common">Gluconobacter suboxydans</name>
    <dbReference type="NCBI Taxonomy" id="290633"/>
    <lineage>
        <taxon>Bacteria</taxon>
        <taxon>Pseudomonadati</taxon>
        <taxon>Pseudomonadota</taxon>
        <taxon>Alphaproteobacteria</taxon>
        <taxon>Acetobacterales</taxon>
        <taxon>Acetobacteraceae</taxon>
        <taxon>Gluconobacter</taxon>
    </lineage>
</organism>
<accession>Q5FPT6</accession>
<comment type="function">
    <text evidence="1">Modifies, by uridylylation and deuridylylation, the PII regulatory proteins (GlnB and homologs), in response to the nitrogen status of the cell that GlnD senses through the glutamine level. Under low glutamine levels, catalyzes the conversion of the PII proteins and UTP to PII-UMP and PPi, while under higher glutamine levels, GlnD hydrolyzes PII-UMP to PII and UMP (deuridylylation). Thus, controls uridylylation state and activity of the PII proteins, and plays an important role in the regulation of nitrogen assimilation and metabolism.</text>
</comment>
<comment type="catalytic activity">
    <reaction evidence="1">
        <text>[protein-PII]-L-tyrosine + UTP = [protein-PII]-uridylyl-L-tyrosine + diphosphate</text>
        <dbReference type="Rhea" id="RHEA:13673"/>
        <dbReference type="Rhea" id="RHEA-COMP:12147"/>
        <dbReference type="Rhea" id="RHEA-COMP:12148"/>
        <dbReference type="ChEBI" id="CHEBI:33019"/>
        <dbReference type="ChEBI" id="CHEBI:46398"/>
        <dbReference type="ChEBI" id="CHEBI:46858"/>
        <dbReference type="ChEBI" id="CHEBI:90602"/>
        <dbReference type="EC" id="2.7.7.59"/>
    </reaction>
</comment>
<comment type="catalytic activity">
    <reaction evidence="1">
        <text>[protein-PII]-uridylyl-L-tyrosine + H2O = [protein-PII]-L-tyrosine + UMP + H(+)</text>
        <dbReference type="Rhea" id="RHEA:48600"/>
        <dbReference type="Rhea" id="RHEA-COMP:12147"/>
        <dbReference type="Rhea" id="RHEA-COMP:12148"/>
        <dbReference type="ChEBI" id="CHEBI:15377"/>
        <dbReference type="ChEBI" id="CHEBI:15378"/>
        <dbReference type="ChEBI" id="CHEBI:46858"/>
        <dbReference type="ChEBI" id="CHEBI:57865"/>
        <dbReference type="ChEBI" id="CHEBI:90602"/>
    </reaction>
</comment>
<comment type="cofactor">
    <cofactor evidence="1">
        <name>Mg(2+)</name>
        <dbReference type="ChEBI" id="CHEBI:18420"/>
    </cofactor>
</comment>
<comment type="activity regulation">
    <text evidence="1">Uridylyltransferase (UTase) activity is inhibited by glutamine, while glutamine activates uridylyl-removing (UR) activity.</text>
</comment>
<comment type="domain">
    <text evidence="1">Has four distinct domains: an N-terminal nucleotidyltransferase (NT) domain responsible for UTase activity, a central HD domain that encodes UR activity, and two C-terminal ACT domains that seem to have a role in glutamine sensing.</text>
</comment>
<comment type="similarity">
    <text evidence="1">Belongs to the GlnD family.</text>
</comment>
<gene>
    <name evidence="1" type="primary">glnD</name>
    <name type="ordered locus">GOX1872</name>
</gene>
<name>GLND_GLUOX</name>
<dbReference type="EC" id="2.7.7.59" evidence="1"/>
<dbReference type="EC" id="3.1.4.-" evidence="1"/>
<dbReference type="EMBL" id="CP000009">
    <property type="protein sequence ID" value="AAW61610.1"/>
    <property type="molecule type" value="Genomic_DNA"/>
</dbReference>
<dbReference type="RefSeq" id="WP_011253391.1">
    <property type="nucleotide sequence ID" value="NC_006677.1"/>
</dbReference>
<dbReference type="SMR" id="Q5FPT6"/>
<dbReference type="STRING" id="290633.GOX1872"/>
<dbReference type="KEGG" id="gox:GOX1872"/>
<dbReference type="eggNOG" id="COG2844">
    <property type="taxonomic scope" value="Bacteria"/>
</dbReference>
<dbReference type="HOGENOM" id="CLU_012833_1_0_5"/>
<dbReference type="Proteomes" id="UP000006375">
    <property type="component" value="Chromosome"/>
</dbReference>
<dbReference type="GO" id="GO:0008773">
    <property type="term" value="F:[protein-PII] uridylyltransferase activity"/>
    <property type="evidence" value="ECO:0007669"/>
    <property type="project" value="UniProtKB-UniRule"/>
</dbReference>
<dbReference type="GO" id="GO:0008081">
    <property type="term" value="F:phosphoric diester hydrolase activity"/>
    <property type="evidence" value="ECO:0007669"/>
    <property type="project" value="UniProtKB-UniRule"/>
</dbReference>
<dbReference type="GO" id="GO:0006808">
    <property type="term" value="P:regulation of nitrogen utilization"/>
    <property type="evidence" value="ECO:0007669"/>
    <property type="project" value="UniProtKB-UniRule"/>
</dbReference>
<dbReference type="CDD" id="cd04899">
    <property type="entry name" value="ACT_ACR-UUR-like_2"/>
    <property type="match status" value="1"/>
</dbReference>
<dbReference type="CDD" id="cd04900">
    <property type="entry name" value="ACT_UUR-like_1"/>
    <property type="match status" value="1"/>
</dbReference>
<dbReference type="CDD" id="cd00077">
    <property type="entry name" value="HDc"/>
    <property type="match status" value="1"/>
</dbReference>
<dbReference type="CDD" id="cd05401">
    <property type="entry name" value="NT_GlnE_GlnD_like"/>
    <property type="match status" value="1"/>
</dbReference>
<dbReference type="Gene3D" id="3.30.70.260">
    <property type="match status" value="2"/>
</dbReference>
<dbReference type="Gene3D" id="1.10.3090.10">
    <property type="entry name" value="cca-adding enzyme, domain 2"/>
    <property type="match status" value="1"/>
</dbReference>
<dbReference type="HAMAP" id="MF_00277">
    <property type="entry name" value="PII_uridylyl_transf"/>
    <property type="match status" value="1"/>
</dbReference>
<dbReference type="InterPro" id="IPR045865">
    <property type="entry name" value="ACT-like_dom_sf"/>
</dbReference>
<dbReference type="InterPro" id="IPR002912">
    <property type="entry name" value="ACT_dom"/>
</dbReference>
<dbReference type="InterPro" id="IPR003607">
    <property type="entry name" value="HD/PDEase_dom"/>
</dbReference>
<dbReference type="InterPro" id="IPR006674">
    <property type="entry name" value="HD_domain"/>
</dbReference>
<dbReference type="InterPro" id="IPR043519">
    <property type="entry name" value="NT_sf"/>
</dbReference>
<dbReference type="InterPro" id="IPR013546">
    <property type="entry name" value="PII_UdlTrfase/GS_AdlTrfase"/>
</dbReference>
<dbReference type="InterPro" id="IPR002934">
    <property type="entry name" value="Polymerase_NTP_transf_dom"/>
</dbReference>
<dbReference type="InterPro" id="IPR010043">
    <property type="entry name" value="UTase/UR"/>
</dbReference>
<dbReference type="NCBIfam" id="NF003467">
    <property type="entry name" value="PRK05092.1"/>
    <property type="match status" value="1"/>
</dbReference>
<dbReference type="NCBIfam" id="TIGR01693">
    <property type="entry name" value="UTase_glnD"/>
    <property type="match status" value="1"/>
</dbReference>
<dbReference type="PANTHER" id="PTHR47320">
    <property type="entry name" value="BIFUNCTIONAL URIDYLYLTRANSFERASE/URIDYLYL-REMOVING ENZYME"/>
    <property type="match status" value="1"/>
</dbReference>
<dbReference type="PANTHER" id="PTHR47320:SF1">
    <property type="entry name" value="BIFUNCTIONAL URIDYLYLTRANSFERASE_URIDYLYL-REMOVING ENZYME"/>
    <property type="match status" value="1"/>
</dbReference>
<dbReference type="Pfam" id="PF24931">
    <property type="entry name" value="ACT_ACR9_3rd"/>
    <property type="match status" value="1"/>
</dbReference>
<dbReference type="Pfam" id="PF08335">
    <property type="entry name" value="GlnD_UR_UTase"/>
    <property type="match status" value="1"/>
</dbReference>
<dbReference type="Pfam" id="PF01966">
    <property type="entry name" value="HD"/>
    <property type="match status" value="1"/>
</dbReference>
<dbReference type="Pfam" id="PF01909">
    <property type="entry name" value="NTP_transf_2"/>
    <property type="match status" value="1"/>
</dbReference>
<dbReference type="PIRSF" id="PIRSF006288">
    <property type="entry name" value="PII_uridyltransf"/>
    <property type="match status" value="1"/>
</dbReference>
<dbReference type="SMART" id="SM00471">
    <property type="entry name" value="HDc"/>
    <property type="match status" value="1"/>
</dbReference>
<dbReference type="SUPFAM" id="SSF55021">
    <property type="entry name" value="ACT-like"/>
    <property type="match status" value="2"/>
</dbReference>
<dbReference type="SUPFAM" id="SSF109604">
    <property type="entry name" value="HD-domain/PDEase-like"/>
    <property type="match status" value="1"/>
</dbReference>
<dbReference type="SUPFAM" id="SSF81301">
    <property type="entry name" value="Nucleotidyltransferase"/>
    <property type="match status" value="1"/>
</dbReference>
<dbReference type="SUPFAM" id="SSF81593">
    <property type="entry name" value="Nucleotidyltransferase substrate binding subunit/domain"/>
    <property type="match status" value="1"/>
</dbReference>
<dbReference type="PROSITE" id="PS51671">
    <property type="entry name" value="ACT"/>
    <property type="match status" value="2"/>
</dbReference>
<dbReference type="PROSITE" id="PS51831">
    <property type="entry name" value="HD"/>
    <property type="match status" value="1"/>
</dbReference>
<proteinExistence type="inferred from homology"/>
<sequence>MKETSFWGETPSLSFADDTDKPLSDRTASPPCDPASSLQTALDTAAAQGQTTRENVLSILRRHLGSGNATVRREFEKRRMSGIDAARALARQADDMVCALAELAAQKHESPGETLCLCATGGYGAGLLAPFSDIDILFLIPGDPTPAMTARIEFILYALWDLGLRVGHATRSIAECVRDADSDLTIRTALLDLRFLHGERGLARDLRCALGADLQNDRLCEFVMGKIAEREQRHRRFGDNPYMVEPNIKEGRGGLRDLQTLNWMGRAALGCAVSTPDRSGQPAEAPQTPSFASFGLLTDRESLRARRSWDFLWTVRLHLHYITGRAEERLTFDVQPVIGGRMGYATHGRQRGVERFMRHYFLTARDVMRLTSVLQPVVLMHLQDQTTGEPPKVVPGPEEFQTIAGRICPIEPVTFAAQPREMFRLLDCGRRHDLPLHPIAMQQIIRNERHAVTLRDDPETAKIFLDLLCEPSADETKAVPFWLPILNETGLLGRLLPDWSRVVGQMQFDSYHIYTVDEHIVEAVRMMGQIEAGRMADEIPLAYTLASDLRSRRALYVAVLLHDIGKGRGGDHSEIGADLALTICPQLGLDPEETDTVSWLVLHHLLLSQTAFTRDIDDPRTILDLADTIQSPERLRLLLLLTIADMRAVSPKVWNAWKATLLRELFSRVAEVLEGGLAATERDSRVNHARELARDGLTGILPESSIDRFLDLGYPSYWLGFDTDTQMRHARMVHDSDRYRSPVTVEAYPIPERGVTELTVLCADHPGLFSQIAGALAVSGASIVDARIHTLSDGMALDTFWVQDGEGCSFEEPHQLGRLNHLVEQALSGRLDIRKGIEDASHHSTSRRMRAIHVPPRVVIDNTASDRHTVIEVNGRDRPGLLHDVTSALSSASLQISSAHITTYGMRAVDVFYVRDLLGMKITDPVRLARLRETLLASLTSAPVTTPAS</sequence>
<feature type="chain" id="PRO_0000192735" description="Bifunctional uridylyltransferase/uridylyl-removing enzyme">
    <location>
        <begin position="1"/>
        <end position="949"/>
    </location>
</feature>
<feature type="domain" description="HD" evidence="2">
    <location>
        <begin position="516"/>
        <end position="632"/>
    </location>
</feature>
<feature type="domain" description="ACT 1" evidence="1">
    <location>
        <begin position="757"/>
        <end position="834"/>
    </location>
</feature>
<feature type="domain" description="ACT 2" evidence="1">
    <location>
        <begin position="870"/>
        <end position="949"/>
    </location>
</feature>
<feature type="region of interest" description="Uridylyltransferase">
    <location>
        <begin position="1"/>
        <end position="395"/>
    </location>
</feature>
<feature type="region of interest" description="Disordered" evidence="3">
    <location>
        <begin position="1"/>
        <end position="37"/>
    </location>
</feature>
<feature type="region of interest" description="Uridylyl-removing">
    <location>
        <begin position="396"/>
        <end position="756"/>
    </location>
</feature>
<protein>
    <recommendedName>
        <fullName evidence="1">Bifunctional uridylyltransferase/uridylyl-removing enzyme</fullName>
        <shortName evidence="1">UTase/UR</shortName>
    </recommendedName>
    <alternativeName>
        <fullName evidence="1">Bifunctional [protein-PII] modification enzyme</fullName>
    </alternativeName>
    <alternativeName>
        <fullName evidence="1">Bifunctional nitrogen sensor protein</fullName>
    </alternativeName>
    <domain>
        <recommendedName>
            <fullName evidence="1">[Protein-PII] uridylyltransferase</fullName>
            <shortName evidence="1">PII uridylyltransferase</shortName>
            <shortName evidence="1">UTase</shortName>
            <ecNumber evidence="1">2.7.7.59</ecNumber>
        </recommendedName>
    </domain>
    <domain>
        <recommendedName>
            <fullName evidence="1">[Protein-PII]-UMP uridylyl-removing enzyme</fullName>
            <shortName evidence="1">UR</shortName>
            <ecNumber evidence="1">3.1.4.-</ecNumber>
        </recommendedName>
    </domain>
</protein>
<reference key="1">
    <citation type="journal article" date="2005" name="Nat. Biotechnol.">
        <title>Complete genome sequence of the acetic acid bacterium Gluconobacter oxydans.</title>
        <authorList>
            <person name="Prust C."/>
            <person name="Hoffmeister M."/>
            <person name="Liesegang H."/>
            <person name="Wiezer A."/>
            <person name="Fricke W.F."/>
            <person name="Ehrenreich A."/>
            <person name="Gottschalk G."/>
            <person name="Deppenmeier U."/>
        </authorList>
    </citation>
    <scope>NUCLEOTIDE SEQUENCE [LARGE SCALE GENOMIC DNA]</scope>
    <source>
        <strain>621H</strain>
    </source>
</reference>
<keyword id="KW-0378">Hydrolase</keyword>
<keyword id="KW-0460">Magnesium</keyword>
<keyword id="KW-0511">Multifunctional enzyme</keyword>
<keyword id="KW-0548">Nucleotidyltransferase</keyword>
<keyword id="KW-1185">Reference proteome</keyword>
<keyword id="KW-0677">Repeat</keyword>
<keyword id="KW-0808">Transferase</keyword>